<proteinExistence type="evidence at transcript level"/>
<protein>
    <recommendedName>
        <fullName evidence="1">Lipoyl synthase, mitochondrial</fullName>
        <ecNumber evidence="1">2.8.1.8</ecNumber>
    </recommendedName>
    <alternativeName>
        <fullName evidence="1">Lipoate synthase</fullName>
        <shortName evidence="1">LS</shortName>
        <shortName evidence="1">Lip-syn</shortName>
    </alternativeName>
    <alternativeName>
        <fullName evidence="1">Lipoic acid synthase</fullName>
    </alternativeName>
</protein>
<accession>B7FM45</accession>
<gene>
    <name evidence="1" type="primary">LIP1</name>
</gene>
<feature type="chain" id="PRO_0000398847" description="Lipoyl synthase, mitochondrial">
    <location>
        <begin position="1"/>
        <end position="378"/>
    </location>
</feature>
<feature type="domain" description="Radical SAM core" evidence="2">
    <location>
        <begin position="125"/>
        <end position="345"/>
    </location>
</feature>
<feature type="binding site" evidence="1">
    <location>
        <position position="109"/>
    </location>
    <ligand>
        <name>[4Fe-4S] cluster</name>
        <dbReference type="ChEBI" id="CHEBI:49883"/>
        <label>1</label>
    </ligand>
</feature>
<feature type="binding site" evidence="1">
    <location>
        <position position="114"/>
    </location>
    <ligand>
        <name>[4Fe-4S] cluster</name>
        <dbReference type="ChEBI" id="CHEBI:49883"/>
        <label>1</label>
    </ligand>
</feature>
<feature type="binding site" evidence="1">
    <location>
        <position position="120"/>
    </location>
    <ligand>
        <name>[4Fe-4S] cluster</name>
        <dbReference type="ChEBI" id="CHEBI:49883"/>
        <label>1</label>
    </ligand>
</feature>
<feature type="binding site" evidence="1">
    <location>
        <position position="140"/>
    </location>
    <ligand>
        <name>[4Fe-4S] cluster</name>
        <dbReference type="ChEBI" id="CHEBI:49883"/>
        <label>2</label>
        <note>4Fe-4S-S-AdoMet</note>
    </ligand>
</feature>
<feature type="binding site" evidence="1">
    <location>
        <position position="144"/>
    </location>
    <ligand>
        <name>[4Fe-4S] cluster</name>
        <dbReference type="ChEBI" id="CHEBI:49883"/>
        <label>2</label>
        <note>4Fe-4S-S-AdoMet</note>
    </ligand>
</feature>
<feature type="binding site" evidence="1">
    <location>
        <position position="147"/>
    </location>
    <ligand>
        <name>[4Fe-4S] cluster</name>
        <dbReference type="ChEBI" id="CHEBI:49883"/>
        <label>2</label>
        <note>4Fe-4S-S-AdoMet</note>
    </ligand>
</feature>
<feature type="binding site" evidence="1">
    <location>
        <position position="356"/>
    </location>
    <ligand>
        <name>[4Fe-4S] cluster</name>
        <dbReference type="ChEBI" id="CHEBI:49883"/>
        <label>1</label>
    </ligand>
</feature>
<name>LIAS_MEDTR</name>
<evidence type="ECO:0000255" key="1">
    <source>
        <dbReference type="HAMAP-Rule" id="MF_03128"/>
    </source>
</evidence>
<evidence type="ECO:0000255" key="2">
    <source>
        <dbReference type="PROSITE-ProRule" id="PRU01266"/>
    </source>
</evidence>
<organism>
    <name type="scientific">Medicago truncatula</name>
    <name type="common">Barrel medic</name>
    <name type="synonym">Medicago tribuloides</name>
    <dbReference type="NCBI Taxonomy" id="3880"/>
    <lineage>
        <taxon>Eukaryota</taxon>
        <taxon>Viridiplantae</taxon>
        <taxon>Streptophyta</taxon>
        <taxon>Embryophyta</taxon>
        <taxon>Tracheophyta</taxon>
        <taxon>Spermatophyta</taxon>
        <taxon>Magnoliopsida</taxon>
        <taxon>eudicotyledons</taxon>
        <taxon>Gunneridae</taxon>
        <taxon>Pentapetalae</taxon>
        <taxon>rosids</taxon>
        <taxon>fabids</taxon>
        <taxon>Fabales</taxon>
        <taxon>Fabaceae</taxon>
        <taxon>Papilionoideae</taxon>
        <taxon>50 kb inversion clade</taxon>
        <taxon>NPAAA clade</taxon>
        <taxon>Hologalegina</taxon>
        <taxon>IRL clade</taxon>
        <taxon>Trifolieae</taxon>
        <taxon>Medicago</taxon>
    </lineage>
</organism>
<sequence length="378" mass="41913">MMYSRFRTVAKNLKSTTKPFSFTTATTTTTVSSSEFPQNLTELRARLARESPSLSDFISLKSNNAYSVEVGTKKNPLPKPKWMKESIPGGWKYVQIKKKLRELKLHTVCEEAKCPNMGECWSGGETGTATATIMILGDTCTRGCRFCNVKTSRTPPPPDPDEPTNVAEAIASWGLDYVVITSVGRDDLPDQGSSHFTETVQKLKILKPSILIEALVPDFRGNAECVEKVSKSGLDVFAHNIETVEELQSAVRDHRANFNQSLDVLRMAKDYAPAGTLTKTSIMLGCGETPDQIVKTMEKVRAAGVDVMTFGQYMRPSKRHMPVSEYITPEAFEKYQTLGMEMGFRYVASGPMVRSSYKAGEFYIKSMIDSDRAVSSQS</sequence>
<dbReference type="EC" id="2.8.1.8" evidence="1"/>
<dbReference type="EMBL" id="BT053168">
    <property type="protein sequence ID" value="ACJ85828.1"/>
    <property type="molecule type" value="mRNA"/>
</dbReference>
<dbReference type="SMR" id="B7FM45"/>
<dbReference type="UniPathway" id="UPA00538">
    <property type="reaction ID" value="UER00593"/>
</dbReference>
<dbReference type="GO" id="GO:0005739">
    <property type="term" value="C:mitochondrion"/>
    <property type="evidence" value="ECO:0007669"/>
    <property type="project" value="UniProtKB-SubCell"/>
</dbReference>
<dbReference type="GO" id="GO:0051539">
    <property type="term" value="F:4 iron, 4 sulfur cluster binding"/>
    <property type="evidence" value="ECO:0007669"/>
    <property type="project" value="UniProtKB-UniRule"/>
</dbReference>
<dbReference type="GO" id="GO:0016992">
    <property type="term" value="F:lipoate synthase activity"/>
    <property type="evidence" value="ECO:0007669"/>
    <property type="project" value="UniProtKB-UniRule"/>
</dbReference>
<dbReference type="GO" id="GO:0046872">
    <property type="term" value="F:metal ion binding"/>
    <property type="evidence" value="ECO:0007669"/>
    <property type="project" value="UniProtKB-KW"/>
</dbReference>
<dbReference type="CDD" id="cd01335">
    <property type="entry name" value="Radical_SAM"/>
    <property type="match status" value="1"/>
</dbReference>
<dbReference type="FunFam" id="3.20.20.70:FF:000125">
    <property type="entry name" value="Lipoyl synthase, mitochondrial"/>
    <property type="match status" value="1"/>
</dbReference>
<dbReference type="Gene3D" id="3.20.20.70">
    <property type="entry name" value="Aldolase class I"/>
    <property type="match status" value="1"/>
</dbReference>
<dbReference type="HAMAP" id="MF_00206">
    <property type="entry name" value="Lipoyl_synth"/>
    <property type="match status" value="1"/>
</dbReference>
<dbReference type="HAMAP" id="MF_03128">
    <property type="entry name" value="Lipoyl_synth_plantM"/>
    <property type="match status" value="1"/>
</dbReference>
<dbReference type="InterPro" id="IPR013785">
    <property type="entry name" value="Aldolase_TIM"/>
</dbReference>
<dbReference type="InterPro" id="IPR006638">
    <property type="entry name" value="Elp3/MiaA/NifB-like_rSAM"/>
</dbReference>
<dbReference type="InterPro" id="IPR031691">
    <property type="entry name" value="LIAS_N"/>
</dbReference>
<dbReference type="InterPro" id="IPR003698">
    <property type="entry name" value="Lipoyl_synth"/>
</dbReference>
<dbReference type="InterPro" id="IPR027527">
    <property type="entry name" value="Lipoyl_synth_mt"/>
</dbReference>
<dbReference type="InterPro" id="IPR007197">
    <property type="entry name" value="rSAM"/>
</dbReference>
<dbReference type="NCBIfam" id="TIGR00510">
    <property type="entry name" value="lipA"/>
    <property type="match status" value="1"/>
</dbReference>
<dbReference type="NCBIfam" id="NF004019">
    <property type="entry name" value="PRK05481.1"/>
    <property type="match status" value="1"/>
</dbReference>
<dbReference type="NCBIfam" id="NF009544">
    <property type="entry name" value="PRK12928.1"/>
    <property type="match status" value="1"/>
</dbReference>
<dbReference type="PANTHER" id="PTHR10949">
    <property type="entry name" value="LIPOYL SYNTHASE"/>
    <property type="match status" value="1"/>
</dbReference>
<dbReference type="PANTHER" id="PTHR10949:SF0">
    <property type="entry name" value="LIPOYL SYNTHASE, MITOCHONDRIAL"/>
    <property type="match status" value="1"/>
</dbReference>
<dbReference type="Pfam" id="PF16881">
    <property type="entry name" value="LIAS_N"/>
    <property type="match status" value="1"/>
</dbReference>
<dbReference type="Pfam" id="PF04055">
    <property type="entry name" value="Radical_SAM"/>
    <property type="match status" value="1"/>
</dbReference>
<dbReference type="PIRSF" id="PIRSF005963">
    <property type="entry name" value="Lipoyl_synth"/>
    <property type="match status" value="1"/>
</dbReference>
<dbReference type="SFLD" id="SFLDF00271">
    <property type="entry name" value="lipoyl_synthase"/>
    <property type="match status" value="1"/>
</dbReference>
<dbReference type="SFLD" id="SFLDS00029">
    <property type="entry name" value="Radical_SAM"/>
    <property type="match status" value="1"/>
</dbReference>
<dbReference type="SMART" id="SM00729">
    <property type="entry name" value="Elp3"/>
    <property type="match status" value="1"/>
</dbReference>
<dbReference type="SUPFAM" id="SSF102114">
    <property type="entry name" value="Radical SAM enzymes"/>
    <property type="match status" value="1"/>
</dbReference>
<dbReference type="PROSITE" id="PS51918">
    <property type="entry name" value="RADICAL_SAM"/>
    <property type="match status" value="1"/>
</dbReference>
<reference key="1">
    <citation type="submission" date="2008-12" db="EMBL/GenBank/DDBJ databases">
        <title>Medicago truncatula full length cDNA cloning project.</title>
        <authorList>
            <person name="Moskal W."/>
            <person name="Chan A."/>
            <person name="Cheung F."/>
            <person name="Xiao Y."/>
            <person name="Town C.D."/>
        </authorList>
    </citation>
    <scope>NUCLEOTIDE SEQUENCE [LARGE SCALE MRNA]</scope>
</reference>
<keyword id="KW-0004">4Fe-4S</keyword>
<keyword id="KW-0408">Iron</keyword>
<keyword id="KW-0411">Iron-sulfur</keyword>
<keyword id="KW-0479">Metal-binding</keyword>
<keyword id="KW-0496">Mitochondrion</keyword>
<keyword id="KW-0949">S-adenosyl-L-methionine</keyword>
<keyword id="KW-0808">Transferase</keyword>
<comment type="function">
    <text evidence="1">Catalyzes the radical-mediated insertion of two sulfur atoms into the C-6 and C-8 positions of the octanoyl moiety bound to the lipoyl domains of lipoate-dependent enzymes, thereby converting the octanoylated domains into lipoylated derivatives.</text>
</comment>
<comment type="catalytic activity">
    <reaction evidence="1">
        <text>[[Fe-S] cluster scaffold protein carrying a second [4Fe-4S](2+) cluster] + N(6)-octanoyl-L-lysyl-[protein] + 2 oxidized [2Fe-2S]-[ferredoxin] + 2 S-adenosyl-L-methionine + 4 H(+) = [[Fe-S] cluster scaffold protein] + N(6)-[(R)-dihydrolipoyl]-L-lysyl-[protein] + 4 Fe(3+) + 2 hydrogen sulfide + 2 5'-deoxyadenosine + 2 L-methionine + 2 reduced [2Fe-2S]-[ferredoxin]</text>
        <dbReference type="Rhea" id="RHEA:16585"/>
        <dbReference type="Rhea" id="RHEA-COMP:9928"/>
        <dbReference type="Rhea" id="RHEA-COMP:10000"/>
        <dbReference type="Rhea" id="RHEA-COMP:10001"/>
        <dbReference type="Rhea" id="RHEA-COMP:10475"/>
        <dbReference type="Rhea" id="RHEA-COMP:14568"/>
        <dbReference type="Rhea" id="RHEA-COMP:14569"/>
        <dbReference type="ChEBI" id="CHEBI:15378"/>
        <dbReference type="ChEBI" id="CHEBI:17319"/>
        <dbReference type="ChEBI" id="CHEBI:29034"/>
        <dbReference type="ChEBI" id="CHEBI:29919"/>
        <dbReference type="ChEBI" id="CHEBI:33722"/>
        <dbReference type="ChEBI" id="CHEBI:33737"/>
        <dbReference type="ChEBI" id="CHEBI:33738"/>
        <dbReference type="ChEBI" id="CHEBI:57844"/>
        <dbReference type="ChEBI" id="CHEBI:59789"/>
        <dbReference type="ChEBI" id="CHEBI:78809"/>
        <dbReference type="ChEBI" id="CHEBI:83100"/>
        <dbReference type="EC" id="2.8.1.8"/>
    </reaction>
</comment>
<comment type="cofactor">
    <cofactor evidence="1">
        <name>[4Fe-4S] cluster</name>
        <dbReference type="ChEBI" id="CHEBI:49883"/>
    </cofactor>
    <text evidence="1">Binds 2 [4Fe-4S] clusters per subunit. One cluster is coordinated with 3 cysteines and an exchangeable S-adenosyl-L-methionine.</text>
</comment>
<comment type="pathway">
    <text evidence="1">Protein modification; protein lipoylation via endogenous pathway; protein N(6)-(lipoyl)lysine from octanoyl-[acyl-carrier-protein]: step 2/2.</text>
</comment>
<comment type="subcellular location">
    <subcellularLocation>
        <location evidence="1">Mitochondrion</location>
    </subcellularLocation>
</comment>
<comment type="miscellaneous">
    <text evidence="1">This protein may be expected to contain an N-terminal transit peptide but none has been predicted.</text>
</comment>
<comment type="similarity">
    <text evidence="1">Belongs to the radical SAM superfamily. Lipoyl synthase family.</text>
</comment>